<reference key="1">
    <citation type="submission" date="2007-10" db="EMBL/GenBank/DDBJ databases">
        <title>Brucella canis ATCC 23365 whole genome shotgun sequencing project.</title>
        <authorList>
            <person name="Setubal J.C."/>
            <person name="Bowns C."/>
            <person name="Boyle S."/>
            <person name="Crasta O.R."/>
            <person name="Czar M.J."/>
            <person name="Dharmanolla C."/>
            <person name="Gillespie J.J."/>
            <person name="Kenyon R.W."/>
            <person name="Lu J."/>
            <person name="Mane S."/>
            <person name="Mohapatra S."/>
            <person name="Nagrani S."/>
            <person name="Purkayastha A."/>
            <person name="Rajasimha H.K."/>
            <person name="Shallom J.M."/>
            <person name="Shallom S."/>
            <person name="Shukla M."/>
            <person name="Snyder E.E."/>
            <person name="Sobral B.W."/>
            <person name="Wattam A.R."/>
            <person name="Will R."/>
            <person name="Williams K."/>
            <person name="Yoo H."/>
            <person name="Bruce D."/>
            <person name="Detter C."/>
            <person name="Munk C."/>
            <person name="Brettin T.S."/>
        </authorList>
    </citation>
    <scope>NUCLEOTIDE SEQUENCE [LARGE SCALE GENOMIC DNA]</scope>
    <source>
        <strain>ATCC 23365 / NCTC 10854 / RM-666</strain>
    </source>
</reference>
<evidence type="ECO:0000255" key="1">
    <source>
        <dbReference type="HAMAP-Rule" id="MF_00368"/>
    </source>
</evidence>
<evidence type="ECO:0000305" key="2"/>
<sequence>MADLAKIVEDLSALTVLEAAELSKLLEEKWGVSAAAPVAVAAAGGAAPAAAAEEKTEFDVVLADGGANKINVIKEVRALTGLGLKEAKDLVEGAPKAVKEGASKDEAEKIKAQLEAAGAKVELK</sequence>
<organism>
    <name type="scientific">Brucella canis (strain ATCC 23365 / NCTC 10854 / RM-666)</name>
    <dbReference type="NCBI Taxonomy" id="483179"/>
    <lineage>
        <taxon>Bacteria</taxon>
        <taxon>Pseudomonadati</taxon>
        <taxon>Pseudomonadota</taxon>
        <taxon>Alphaproteobacteria</taxon>
        <taxon>Hyphomicrobiales</taxon>
        <taxon>Brucellaceae</taxon>
        <taxon>Brucella/Ochrobactrum group</taxon>
        <taxon>Brucella</taxon>
    </lineage>
</organism>
<accession>A9M5R1</accession>
<comment type="function">
    <text evidence="1">Forms part of the ribosomal stalk which helps the ribosome interact with GTP-bound translation factors. Is thus essential for accurate translation.</text>
</comment>
<comment type="subunit">
    <text evidence="1">Homodimer. Part of the ribosomal stalk of the 50S ribosomal subunit. Forms a multimeric L10(L12)X complex, where L10 forms an elongated spine to which 2 to 4 L12 dimers bind in a sequential fashion. Binds GTP-bound translation factors.</text>
</comment>
<comment type="similarity">
    <text evidence="1">Belongs to the bacterial ribosomal protein bL12 family.</text>
</comment>
<gene>
    <name evidence="1" type="primary">rplL</name>
    <name type="ordered locus">BCAN_A1267</name>
</gene>
<protein>
    <recommendedName>
        <fullName evidence="1">Large ribosomal subunit protein bL12</fullName>
    </recommendedName>
    <alternativeName>
        <fullName evidence="2">50S ribosomal protein L7/L12</fullName>
    </alternativeName>
</protein>
<dbReference type="EMBL" id="CP000872">
    <property type="protein sequence ID" value="ABX62316.1"/>
    <property type="molecule type" value="Genomic_DNA"/>
</dbReference>
<dbReference type="RefSeq" id="WP_002964371.1">
    <property type="nucleotide sequence ID" value="NC_010103.1"/>
</dbReference>
<dbReference type="SMR" id="A9M5R1"/>
<dbReference type="GeneID" id="97533516"/>
<dbReference type="KEGG" id="bcs:BCAN_A1267"/>
<dbReference type="HOGENOM" id="CLU_086499_3_0_5"/>
<dbReference type="PhylomeDB" id="A9M5R1"/>
<dbReference type="Proteomes" id="UP000001385">
    <property type="component" value="Chromosome I"/>
</dbReference>
<dbReference type="GO" id="GO:0022625">
    <property type="term" value="C:cytosolic large ribosomal subunit"/>
    <property type="evidence" value="ECO:0007669"/>
    <property type="project" value="TreeGrafter"/>
</dbReference>
<dbReference type="GO" id="GO:0003729">
    <property type="term" value="F:mRNA binding"/>
    <property type="evidence" value="ECO:0007669"/>
    <property type="project" value="TreeGrafter"/>
</dbReference>
<dbReference type="GO" id="GO:0003735">
    <property type="term" value="F:structural constituent of ribosome"/>
    <property type="evidence" value="ECO:0007669"/>
    <property type="project" value="InterPro"/>
</dbReference>
<dbReference type="GO" id="GO:0006412">
    <property type="term" value="P:translation"/>
    <property type="evidence" value="ECO:0007669"/>
    <property type="project" value="UniProtKB-UniRule"/>
</dbReference>
<dbReference type="CDD" id="cd00387">
    <property type="entry name" value="Ribosomal_L7_L12"/>
    <property type="match status" value="1"/>
</dbReference>
<dbReference type="FunFam" id="3.30.1390.10:FF:000001">
    <property type="entry name" value="50S ribosomal protein L7/L12"/>
    <property type="match status" value="1"/>
</dbReference>
<dbReference type="Gene3D" id="3.30.1390.10">
    <property type="match status" value="1"/>
</dbReference>
<dbReference type="Gene3D" id="1.20.5.710">
    <property type="entry name" value="Single helix bin"/>
    <property type="match status" value="1"/>
</dbReference>
<dbReference type="HAMAP" id="MF_00368">
    <property type="entry name" value="Ribosomal_bL12"/>
    <property type="match status" value="1"/>
</dbReference>
<dbReference type="InterPro" id="IPR000206">
    <property type="entry name" value="Ribosomal_bL12"/>
</dbReference>
<dbReference type="InterPro" id="IPR013823">
    <property type="entry name" value="Ribosomal_bL12_C"/>
</dbReference>
<dbReference type="InterPro" id="IPR014719">
    <property type="entry name" value="Ribosomal_bL12_C/ClpS-like"/>
</dbReference>
<dbReference type="InterPro" id="IPR008932">
    <property type="entry name" value="Ribosomal_bL12_oligo"/>
</dbReference>
<dbReference type="InterPro" id="IPR036235">
    <property type="entry name" value="Ribosomal_bL12_oligo_N_sf"/>
</dbReference>
<dbReference type="NCBIfam" id="TIGR00855">
    <property type="entry name" value="L12"/>
    <property type="match status" value="1"/>
</dbReference>
<dbReference type="PANTHER" id="PTHR45987">
    <property type="entry name" value="39S RIBOSOMAL PROTEIN L12"/>
    <property type="match status" value="1"/>
</dbReference>
<dbReference type="PANTHER" id="PTHR45987:SF4">
    <property type="entry name" value="LARGE RIBOSOMAL SUBUNIT PROTEIN BL12M"/>
    <property type="match status" value="1"/>
</dbReference>
<dbReference type="Pfam" id="PF00542">
    <property type="entry name" value="Ribosomal_L12"/>
    <property type="match status" value="1"/>
</dbReference>
<dbReference type="Pfam" id="PF16320">
    <property type="entry name" value="Ribosomal_L12_N"/>
    <property type="match status" value="1"/>
</dbReference>
<dbReference type="SUPFAM" id="SSF54736">
    <property type="entry name" value="ClpS-like"/>
    <property type="match status" value="1"/>
</dbReference>
<dbReference type="SUPFAM" id="SSF48300">
    <property type="entry name" value="Ribosomal protein L7/12, oligomerisation (N-terminal) domain"/>
    <property type="match status" value="1"/>
</dbReference>
<proteinExistence type="inferred from homology"/>
<feature type="chain" id="PRO_1000079782" description="Large ribosomal subunit protein bL12">
    <location>
        <begin position="1"/>
        <end position="124"/>
    </location>
</feature>
<keyword id="KW-1185">Reference proteome</keyword>
<keyword id="KW-0687">Ribonucleoprotein</keyword>
<keyword id="KW-0689">Ribosomal protein</keyword>
<name>RL7_BRUC2</name>